<evidence type="ECO:0000250" key="1">
    <source>
        <dbReference type="UniProtKB" id="A0A0U5CJU2"/>
    </source>
</evidence>
<evidence type="ECO:0000250" key="2">
    <source>
        <dbReference type="UniProtKB" id="Q5AR31"/>
    </source>
</evidence>
<evidence type="ECO:0000269" key="3">
    <source>
    </source>
</evidence>
<evidence type="ECO:0000269" key="4">
    <source>
    </source>
</evidence>
<evidence type="ECO:0000269" key="5">
    <source>
    </source>
</evidence>
<evidence type="ECO:0000269" key="6">
    <source>
    </source>
</evidence>
<evidence type="ECO:0000303" key="7">
    <source>
    </source>
</evidence>
<evidence type="ECO:0000305" key="8"/>
<evidence type="ECO:0000305" key="9">
    <source>
    </source>
</evidence>
<name>AUSS_EMENI</name>
<comment type="function">
    <text evidence="1 3 4 5 6">Part of the gene cluster B that mediates the biosynthesis of austinol and dehydroaustinol, two fungal meroterpenoids (PubMed:22329759). The first step of the pathway is the synthesis of 3,5-dimethylorsellinic acid by the polyketide synthase ausA (PubMed:22329759). 3,5-dimethylorsellinic acid is then prenylated by the polyprenyl transferase ausN (PubMed:22329759). Further epoxidation by the FAD-dependent monooxygenase ausM and cyclization by the probable terpene cyclase ausL lead to the formation of protoaustinoid A (PubMed:22329759). Protoaustinoid A is then oxidized to spiro-lactone preaustinoid A3 by the combined action of the FAD-binding monooxygenases ausB and ausC, and the dioxygenase ausE (PubMed:22329759, PubMed:23865690). Acid-catalyzed keto-rearrangement and ring contraction of the tetraketide portion of preaustinoid A3 by ausJ lead to the formation of preaustinoid A4 (PubMed:22329759). The aldo-keto reductase ausK, with the help of ausH, is involved in the next step by transforming preaustinoid A4 into isoaustinone which is in turn hydroxylated by the P450 monooxygenase ausI to form austinolide (PubMed:22329759). Finally, the cytochrome P450 monooxygenase ausG modifies austinolide to austinol (PubMed:22329759). Austinol can be further modified to dehydroaustinol which forms a diffusible complex with diorcinol that initiates conidiation (PubMed:22234162, PubMed:22329759). Due to genetic rearrangements of the clusters and the subsequent loss of some enzymes, the end products of the Emericella nidulans austinoid biosynthesis clusters are austinol and dehydroaustinol, even if additional enzymes, such as the O-acetyltransferase ausQ and the cytochrome P450 monooxygenase ausR are still functional (PubMed:29076725). AusS is necessary for austinoids production and may play a possible function as a regulator (By similarity).</text>
</comment>
<comment type="pathway">
    <text evidence="9">Secondary metabolite biosynthesis; terpenoid biosynthesis.</text>
</comment>
<comment type="subunit">
    <text evidence="2">Homodimer.</text>
</comment>
<comment type="miscellaneous">
    <text evidence="9">In A.calidoustus, the austinoid gene cluster lies on a contiguous DNA region, while clusters from E.nidulans and P.brasilianum are split in their respective genomes. Genetic rearrangements provoked variability among the clusters and E.nidulans produces the least number of austionoid derivatives with the end products austinol and dehydroaustinol, while P.brasilianum can produce until acetoxydehydroaustin, and A.calidoustus produces the highest number of identified derivatives.</text>
</comment>
<comment type="similarity">
    <text evidence="8">Belongs to the trt14 isomerase family.</text>
</comment>
<comment type="sequence caution" evidence="8">
    <conflict type="erroneous initiation">
        <sequence resource="EMBL-CDS" id="EAA66319"/>
    </conflict>
    <text>Extended N-terminus.</text>
</comment>
<dbReference type="EMBL" id="AACD01000172">
    <property type="protein sequence ID" value="EAA66319.1"/>
    <property type="status" value="ALT_INIT"/>
    <property type="molecule type" value="Genomic_DNA"/>
</dbReference>
<dbReference type="EMBL" id="BN001308">
    <property type="protein sequence ID" value="CBF87251.1"/>
    <property type="molecule type" value="Genomic_DNA"/>
</dbReference>
<dbReference type="RefSeq" id="XP_682521.1">
    <property type="nucleotide sequence ID" value="XM_677429.1"/>
</dbReference>
<dbReference type="SMR" id="Q5AR28"/>
<dbReference type="STRING" id="227321.C8VQ89"/>
<dbReference type="EnsemblFungi" id="CBF87251">
    <property type="protein sequence ID" value="CBF87251"/>
    <property type="gene ID" value="ANIA_09252"/>
</dbReference>
<dbReference type="KEGG" id="ani:ANIA_09252"/>
<dbReference type="VEuPathDB" id="FungiDB:AN9252"/>
<dbReference type="eggNOG" id="ENOG502S4TQ">
    <property type="taxonomic scope" value="Eukaryota"/>
</dbReference>
<dbReference type="HOGENOM" id="CLU_108113_3_0_1"/>
<dbReference type="InParanoid" id="Q5AR28"/>
<dbReference type="OMA" id="LRCETIV"/>
<dbReference type="OrthoDB" id="3758478at2759"/>
<dbReference type="UniPathway" id="UPA00213"/>
<dbReference type="Proteomes" id="UP000000560">
    <property type="component" value="Chromosome VIII"/>
</dbReference>
<dbReference type="GO" id="GO:0016114">
    <property type="term" value="P:terpenoid biosynthetic process"/>
    <property type="evidence" value="ECO:0007669"/>
    <property type="project" value="UniProtKB-UniPathway"/>
</dbReference>
<dbReference type="InterPro" id="IPR050977">
    <property type="entry name" value="Fungal_Meroterpenoid_Isomerase"/>
</dbReference>
<dbReference type="PANTHER" id="PTHR39598:SF1">
    <property type="entry name" value="AUSTINOID BIOSYNTHESIS CLUSTERS PROTEIN F-RELATED"/>
    <property type="match status" value="1"/>
</dbReference>
<dbReference type="PANTHER" id="PTHR39598">
    <property type="entry name" value="AUSTINOL SYNTHESIS PROTEIN F-RELATED"/>
    <property type="match status" value="1"/>
</dbReference>
<gene>
    <name evidence="7" type="primary">ausS</name>
    <name type="ORF">AN9252</name>
</gene>
<protein>
    <recommendedName>
        <fullName evidence="7">Austinoid biosynthesis clusters protein S</fullName>
    </recommendedName>
</protein>
<sequence>MSIRERLLATVSKYIAAYNEFDPSAMKTVRTPTCLTHGVAPTCKFTQSMEEHTRHMMLSRGVFRSVNASIVDDNITVVDEVSRQVVVKVKIRCETTVGPYENEAMFIMAMNEEGALVDEIFQFLDTARFRQFQGRLEEAQ</sequence>
<proteinExistence type="inferred from homology"/>
<organism>
    <name type="scientific">Emericella nidulans (strain FGSC A4 / ATCC 38163 / CBS 112.46 / NRRL 194 / M139)</name>
    <name type="common">Aspergillus nidulans</name>
    <dbReference type="NCBI Taxonomy" id="227321"/>
    <lineage>
        <taxon>Eukaryota</taxon>
        <taxon>Fungi</taxon>
        <taxon>Dikarya</taxon>
        <taxon>Ascomycota</taxon>
        <taxon>Pezizomycotina</taxon>
        <taxon>Eurotiomycetes</taxon>
        <taxon>Eurotiomycetidae</taxon>
        <taxon>Eurotiales</taxon>
        <taxon>Aspergillaceae</taxon>
        <taxon>Aspergillus</taxon>
        <taxon>Aspergillus subgen. Nidulantes</taxon>
    </lineage>
</organism>
<feature type="chain" id="PRO_0000453834" description="Austinoid biosynthesis clusters protein S">
    <location>
        <begin position="1"/>
        <end position="140"/>
    </location>
</feature>
<keyword id="KW-1185">Reference proteome</keyword>
<accession>Q5AR28</accession>
<accession>C8VQ89</accession>
<reference key="1">
    <citation type="journal article" date="2005" name="Nature">
        <title>Sequencing of Aspergillus nidulans and comparative analysis with A. fumigatus and A. oryzae.</title>
        <authorList>
            <person name="Galagan J.E."/>
            <person name="Calvo S.E."/>
            <person name="Cuomo C."/>
            <person name="Ma L.-J."/>
            <person name="Wortman J.R."/>
            <person name="Batzoglou S."/>
            <person name="Lee S.-I."/>
            <person name="Bastuerkmen M."/>
            <person name="Spevak C.C."/>
            <person name="Clutterbuck J."/>
            <person name="Kapitonov V."/>
            <person name="Jurka J."/>
            <person name="Scazzocchio C."/>
            <person name="Farman M.L."/>
            <person name="Butler J."/>
            <person name="Purcell S."/>
            <person name="Harris S."/>
            <person name="Braus G.H."/>
            <person name="Draht O."/>
            <person name="Busch S."/>
            <person name="D'Enfert C."/>
            <person name="Bouchier C."/>
            <person name="Goldman G.H."/>
            <person name="Bell-Pedersen D."/>
            <person name="Griffiths-Jones S."/>
            <person name="Doonan J.H."/>
            <person name="Yu J."/>
            <person name="Vienken K."/>
            <person name="Pain A."/>
            <person name="Freitag M."/>
            <person name="Selker E.U."/>
            <person name="Archer D.B."/>
            <person name="Penalva M.A."/>
            <person name="Oakley B.R."/>
            <person name="Momany M."/>
            <person name="Tanaka T."/>
            <person name="Kumagai T."/>
            <person name="Asai K."/>
            <person name="Machida M."/>
            <person name="Nierman W.C."/>
            <person name="Denning D.W."/>
            <person name="Caddick M.X."/>
            <person name="Hynes M."/>
            <person name="Paoletti M."/>
            <person name="Fischer R."/>
            <person name="Miller B.L."/>
            <person name="Dyer P.S."/>
            <person name="Sachs M.S."/>
            <person name="Osmani S.A."/>
            <person name="Birren B.W."/>
        </authorList>
    </citation>
    <scope>NUCLEOTIDE SEQUENCE [LARGE SCALE GENOMIC DNA]</scope>
    <source>
        <strain>FGSC A4 / ATCC 38163 / CBS 112.46 / NRRL 194 / M139</strain>
    </source>
</reference>
<reference key="2">
    <citation type="journal article" date="2009" name="Fungal Genet. Biol.">
        <title>The 2008 update of the Aspergillus nidulans genome annotation: a community effort.</title>
        <authorList>
            <person name="Wortman J.R."/>
            <person name="Gilsenan J.M."/>
            <person name="Joardar V."/>
            <person name="Deegan J."/>
            <person name="Clutterbuck J."/>
            <person name="Andersen M.R."/>
            <person name="Archer D."/>
            <person name="Bencina M."/>
            <person name="Braus G."/>
            <person name="Coutinho P."/>
            <person name="von Dohren H."/>
            <person name="Doonan J."/>
            <person name="Driessen A.J."/>
            <person name="Durek P."/>
            <person name="Espeso E."/>
            <person name="Fekete E."/>
            <person name="Flipphi M."/>
            <person name="Estrada C.G."/>
            <person name="Geysens S."/>
            <person name="Goldman G."/>
            <person name="de Groot P.W."/>
            <person name="Hansen K."/>
            <person name="Harris S.D."/>
            <person name="Heinekamp T."/>
            <person name="Helmstaedt K."/>
            <person name="Henrissat B."/>
            <person name="Hofmann G."/>
            <person name="Homan T."/>
            <person name="Horio T."/>
            <person name="Horiuchi H."/>
            <person name="James S."/>
            <person name="Jones M."/>
            <person name="Karaffa L."/>
            <person name="Karanyi Z."/>
            <person name="Kato M."/>
            <person name="Keller N."/>
            <person name="Kelly D.E."/>
            <person name="Kiel J.A."/>
            <person name="Kim J.M."/>
            <person name="van der Klei I.J."/>
            <person name="Klis F.M."/>
            <person name="Kovalchuk A."/>
            <person name="Krasevec N."/>
            <person name="Kubicek C.P."/>
            <person name="Liu B."/>
            <person name="Maccabe A."/>
            <person name="Meyer V."/>
            <person name="Mirabito P."/>
            <person name="Miskei M."/>
            <person name="Mos M."/>
            <person name="Mullins J."/>
            <person name="Nelson D.R."/>
            <person name="Nielsen J."/>
            <person name="Oakley B.R."/>
            <person name="Osmani S.A."/>
            <person name="Pakula T."/>
            <person name="Paszewski A."/>
            <person name="Paulsen I."/>
            <person name="Pilsyk S."/>
            <person name="Pocsi I."/>
            <person name="Punt P.J."/>
            <person name="Ram A.F."/>
            <person name="Ren Q."/>
            <person name="Robellet X."/>
            <person name="Robson G."/>
            <person name="Seiboth B."/>
            <person name="van Solingen P."/>
            <person name="Specht T."/>
            <person name="Sun J."/>
            <person name="Taheri-Talesh N."/>
            <person name="Takeshita N."/>
            <person name="Ussery D."/>
            <person name="vanKuyk P.A."/>
            <person name="Visser H."/>
            <person name="van de Vondervoort P.J."/>
            <person name="de Vries R.P."/>
            <person name="Walton J."/>
            <person name="Xiang X."/>
            <person name="Xiong Y."/>
            <person name="Zeng A.P."/>
            <person name="Brandt B.W."/>
            <person name="Cornell M.J."/>
            <person name="van den Hondel C.A."/>
            <person name="Visser J."/>
            <person name="Oliver S.G."/>
            <person name="Turner G."/>
        </authorList>
    </citation>
    <scope>GENOME REANNOTATION</scope>
    <source>
        <strain>FGSC A4 / ATCC 38163 / CBS 112.46 / NRRL 194 / M139</strain>
    </source>
</reference>
<reference key="3">
    <citation type="journal article" date="2012" name="ACS Chem. Biol.">
        <title>Signaling the induction of sporulation involves the interaction of two secondary metabolites in Aspergillus nidulans.</title>
        <authorList>
            <person name="Rodriguez-Urra A.B."/>
            <person name="Jimenez C."/>
            <person name="Nieto M.I."/>
            <person name="Rodriguez J."/>
            <person name="Hayashi H."/>
            <person name="Ugalde U."/>
        </authorList>
    </citation>
    <scope>FUNCTION</scope>
</reference>
<reference key="4">
    <citation type="journal article" date="2012" name="J. Am. Chem. Soc.">
        <title>Two separate gene clusters encode the biosynthetic pathway for the meroterpenoids austinol and dehydroaustinol in Aspergillus nidulans.</title>
        <authorList>
            <person name="Lo H.C."/>
            <person name="Entwistle R."/>
            <person name="Guo C.J."/>
            <person name="Ahuja M."/>
            <person name="Szewczyk E."/>
            <person name="Hung J.H."/>
            <person name="Chiang Y.M."/>
            <person name="Oakley B.R."/>
            <person name="Wang C.C."/>
        </authorList>
    </citation>
    <scope>FUNCTION</scope>
</reference>
<reference key="5">
    <citation type="journal article" date="2013" name="J. Am. Chem. Soc.">
        <title>Spiro-ring formation is catalyzed by a multifunctional dioxygenase in austinol biosynthesis.</title>
        <authorList>
            <person name="Matsuda Y."/>
            <person name="Awakawa T."/>
            <person name="Wakimoto T."/>
            <person name="Abe I."/>
        </authorList>
    </citation>
    <scope>FUNCTION</scope>
</reference>
<reference key="6">
    <citation type="journal article" date="2017" name="ACS Chem. Biol.">
        <title>Rewiring of the austinoid biosynthetic pathway in filamentous fungi.</title>
        <authorList>
            <person name="Mattern D.J."/>
            <person name="Valiante V."/>
            <person name="Horn F."/>
            <person name="Petzke L."/>
            <person name="Brakhage A.A."/>
        </authorList>
    </citation>
    <scope>FUNCTION</scope>
</reference>